<keyword id="KW-0227">DNA damage</keyword>
<keyword id="KW-0234">DNA repair</keyword>
<keyword id="KW-0238">DNA-binding</keyword>
<keyword id="KW-0326">Glycosidase</keyword>
<keyword id="KW-0378">Hydrolase</keyword>
<keyword id="KW-0456">Lyase</keyword>
<keyword id="KW-0479">Metal-binding</keyword>
<keyword id="KW-0511">Multifunctional enzyme</keyword>
<keyword id="KW-0862">Zinc</keyword>
<keyword id="KW-0863">Zinc-finger</keyword>
<comment type="function">
    <text evidence="2">Involved in base excision repair of DNA damaged by oxidation or by mutagenic agents. Acts as a DNA glycosylase that recognizes and removes damaged bases. Has a preference for oxidized purines, such as 7,8-dihydro-8-oxoguanine (8-oxoG). Has AP (apurinic/apyrimidinic) lyase activity and introduces nicks in the DNA strand. Cleaves the DNA backbone by beta-delta elimination to generate a single-strand break at the site of the removed base with both 3'- and 5'-phosphates.</text>
</comment>
<comment type="catalytic activity">
    <reaction evidence="2">
        <text>Hydrolysis of DNA containing ring-opened 7-methylguanine residues, releasing 2,6-diamino-4-hydroxy-5-(N-methyl)formamidopyrimidine.</text>
        <dbReference type="EC" id="3.2.2.23"/>
    </reaction>
</comment>
<comment type="catalytic activity">
    <reaction evidence="2">
        <text>2'-deoxyribonucleotide-(2'-deoxyribose 5'-phosphate)-2'-deoxyribonucleotide-DNA = a 3'-end 2'-deoxyribonucleotide-(2,3-dehydro-2,3-deoxyribose 5'-phosphate)-DNA + a 5'-end 5'-phospho-2'-deoxyribonucleoside-DNA + H(+)</text>
        <dbReference type="Rhea" id="RHEA:66592"/>
        <dbReference type="Rhea" id="RHEA-COMP:13180"/>
        <dbReference type="Rhea" id="RHEA-COMP:16897"/>
        <dbReference type="Rhea" id="RHEA-COMP:17067"/>
        <dbReference type="ChEBI" id="CHEBI:15378"/>
        <dbReference type="ChEBI" id="CHEBI:136412"/>
        <dbReference type="ChEBI" id="CHEBI:157695"/>
        <dbReference type="ChEBI" id="CHEBI:167181"/>
        <dbReference type="EC" id="4.2.99.18"/>
    </reaction>
</comment>
<comment type="cofactor">
    <cofactor evidence="2">
        <name>Zn(2+)</name>
        <dbReference type="ChEBI" id="CHEBI:29105"/>
    </cofactor>
    <text evidence="2">Binds 1 zinc ion per subunit.</text>
</comment>
<comment type="subunit">
    <text evidence="2">Monomer.</text>
</comment>
<comment type="similarity">
    <text evidence="2">Belongs to the FPG family.</text>
</comment>
<name>FPG_RICB8</name>
<dbReference type="EC" id="3.2.2.23" evidence="2"/>
<dbReference type="EC" id="4.2.99.18" evidence="2"/>
<dbReference type="EMBL" id="CP000849">
    <property type="protein sequence ID" value="ABV79660.1"/>
    <property type="molecule type" value="Genomic_DNA"/>
</dbReference>
<dbReference type="RefSeq" id="WP_011476941.1">
    <property type="nucleotide sequence ID" value="NC_009883.1"/>
</dbReference>
<dbReference type="SMR" id="A8GXR0"/>
<dbReference type="KEGG" id="rbo:A1I_06720"/>
<dbReference type="HOGENOM" id="CLU_038423_1_1_5"/>
<dbReference type="GO" id="GO:0034039">
    <property type="term" value="F:8-oxo-7,8-dihydroguanine DNA N-glycosylase activity"/>
    <property type="evidence" value="ECO:0007669"/>
    <property type="project" value="TreeGrafter"/>
</dbReference>
<dbReference type="GO" id="GO:0140078">
    <property type="term" value="F:class I DNA-(apurinic or apyrimidinic site) endonuclease activity"/>
    <property type="evidence" value="ECO:0007669"/>
    <property type="project" value="UniProtKB-EC"/>
</dbReference>
<dbReference type="GO" id="GO:0003684">
    <property type="term" value="F:damaged DNA binding"/>
    <property type="evidence" value="ECO:0007669"/>
    <property type="project" value="InterPro"/>
</dbReference>
<dbReference type="GO" id="GO:0008270">
    <property type="term" value="F:zinc ion binding"/>
    <property type="evidence" value="ECO:0007669"/>
    <property type="project" value="UniProtKB-UniRule"/>
</dbReference>
<dbReference type="GO" id="GO:0006284">
    <property type="term" value="P:base-excision repair"/>
    <property type="evidence" value="ECO:0007669"/>
    <property type="project" value="InterPro"/>
</dbReference>
<dbReference type="CDD" id="cd08966">
    <property type="entry name" value="EcFpg-like_N"/>
    <property type="match status" value="1"/>
</dbReference>
<dbReference type="FunFam" id="1.10.8.50:FF:000003">
    <property type="entry name" value="Formamidopyrimidine-DNA glycosylase"/>
    <property type="match status" value="1"/>
</dbReference>
<dbReference type="Gene3D" id="1.10.8.50">
    <property type="match status" value="1"/>
</dbReference>
<dbReference type="Gene3D" id="3.20.190.10">
    <property type="entry name" value="MutM-like, N-terminal"/>
    <property type="match status" value="1"/>
</dbReference>
<dbReference type="HAMAP" id="MF_00103">
    <property type="entry name" value="Fapy_DNA_glycosyl"/>
    <property type="match status" value="1"/>
</dbReference>
<dbReference type="InterPro" id="IPR015886">
    <property type="entry name" value="DNA_glyclase/AP_lyase_DNA-bd"/>
</dbReference>
<dbReference type="InterPro" id="IPR015887">
    <property type="entry name" value="DNA_glyclase_Znf_dom_DNA_BS"/>
</dbReference>
<dbReference type="InterPro" id="IPR020629">
    <property type="entry name" value="Formamido-pyr_DNA_Glyclase"/>
</dbReference>
<dbReference type="InterPro" id="IPR012319">
    <property type="entry name" value="FPG_cat"/>
</dbReference>
<dbReference type="InterPro" id="IPR035937">
    <property type="entry name" value="MutM-like_N-ter"/>
</dbReference>
<dbReference type="InterPro" id="IPR010979">
    <property type="entry name" value="Ribosomal_uS13-like_H2TH"/>
</dbReference>
<dbReference type="InterPro" id="IPR000214">
    <property type="entry name" value="Znf_DNA_glyclase/AP_lyase"/>
</dbReference>
<dbReference type="InterPro" id="IPR010663">
    <property type="entry name" value="Znf_FPG/IleRS"/>
</dbReference>
<dbReference type="NCBIfam" id="TIGR00577">
    <property type="entry name" value="fpg"/>
    <property type="match status" value="1"/>
</dbReference>
<dbReference type="NCBIfam" id="NF002211">
    <property type="entry name" value="PRK01103.1"/>
    <property type="match status" value="1"/>
</dbReference>
<dbReference type="PANTHER" id="PTHR22993">
    <property type="entry name" value="FORMAMIDOPYRIMIDINE-DNA GLYCOSYLASE"/>
    <property type="match status" value="1"/>
</dbReference>
<dbReference type="PANTHER" id="PTHR22993:SF9">
    <property type="entry name" value="FORMAMIDOPYRIMIDINE-DNA GLYCOSYLASE"/>
    <property type="match status" value="1"/>
</dbReference>
<dbReference type="Pfam" id="PF01149">
    <property type="entry name" value="Fapy_DNA_glyco"/>
    <property type="match status" value="1"/>
</dbReference>
<dbReference type="Pfam" id="PF06831">
    <property type="entry name" value="H2TH"/>
    <property type="match status" value="1"/>
</dbReference>
<dbReference type="Pfam" id="PF06827">
    <property type="entry name" value="zf-FPG_IleRS"/>
    <property type="match status" value="1"/>
</dbReference>
<dbReference type="SMART" id="SM00898">
    <property type="entry name" value="Fapy_DNA_glyco"/>
    <property type="match status" value="1"/>
</dbReference>
<dbReference type="SMART" id="SM01232">
    <property type="entry name" value="H2TH"/>
    <property type="match status" value="1"/>
</dbReference>
<dbReference type="SUPFAM" id="SSF57716">
    <property type="entry name" value="Glucocorticoid receptor-like (DNA-binding domain)"/>
    <property type="match status" value="1"/>
</dbReference>
<dbReference type="SUPFAM" id="SSF81624">
    <property type="entry name" value="N-terminal domain of MutM-like DNA repair proteins"/>
    <property type="match status" value="1"/>
</dbReference>
<dbReference type="SUPFAM" id="SSF46946">
    <property type="entry name" value="S13-like H2TH domain"/>
    <property type="match status" value="1"/>
</dbReference>
<dbReference type="PROSITE" id="PS51068">
    <property type="entry name" value="FPG_CAT"/>
    <property type="match status" value="1"/>
</dbReference>
<dbReference type="PROSITE" id="PS01242">
    <property type="entry name" value="ZF_FPG_1"/>
    <property type="match status" value="1"/>
</dbReference>
<dbReference type="PROSITE" id="PS51066">
    <property type="entry name" value="ZF_FPG_2"/>
    <property type="match status" value="1"/>
</dbReference>
<reference key="1">
    <citation type="submission" date="2007-09" db="EMBL/GenBank/DDBJ databases">
        <title>Complete genome sequencing of Rickettsia bellii.</title>
        <authorList>
            <person name="Madan A."/>
            <person name="Lee H."/>
            <person name="Madan A."/>
            <person name="Yoon J.-G."/>
            <person name="Ryu G.-Y."/>
            <person name="Dasch G."/>
            <person name="Ereemeva M."/>
        </authorList>
    </citation>
    <scope>NUCLEOTIDE SEQUENCE [LARGE SCALE GENOMIC DNA]</scope>
    <source>
        <strain>OSU 85-389</strain>
    </source>
</reference>
<accession>A8GXR0</accession>
<feature type="initiator methionine" description="Removed" evidence="1">
    <location>
        <position position="1"/>
    </location>
</feature>
<feature type="chain" id="PRO_1000008761" description="Formamidopyrimidine-DNA glycosylase">
    <location>
        <begin position="2"/>
        <end position="273"/>
    </location>
</feature>
<feature type="zinc finger region" description="FPG-type" evidence="2">
    <location>
        <begin position="238"/>
        <end position="272"/>
    </location>
</feature>
<feature type="active site" description="Schiff-base intermediate with DNA" evidence="2">
    <location>
        <position position="2"/>
    </location>
</feature>
<feature type="active site" description="Proton donor" evidence="2">
    <location>
        <position position="3"/>
    </location>
</feature>
<feature type="active site" description="Proton donor; for beta-elimination activity" evidence="2">
    <location>
        <position position="58"/>
    </location>
</feature>
<feature type="active site" description="Proton donor; for delta-elimination activity" evidence="2">
    <location>
        <position position="262"/>
    </location>
</feature>
<feature type="binding site" evidence="2">
    <location>
        <position position="92"/>
    </location>
    <ligand>
        <name>DNA</name>
        <dbReference type="ChEBI" id="CHEBI:16991"/>
    </ligand>
</feature>
<feature type="binding site" evidence="2">
    <location>
        <position position="111"/>
    </location>
    <ligand>
        <name>DNA</name>
        <dbReference type="ChEBI" id="CHEBI:16991"/>
    </ligand>
</feature>
<feature type="binding site" evidence="2">
    <location>
        <position position="153"/>
    </location>
    <ligand>
        <name>DNA</name>
        <dbReference type="ChEBI" id="CHEBI:16991"/>
    </ligand>
</feature>
<proteinExistence type="inferred from homology"/>
<evidence type="ECO:0000250" key="1"/>
<evidence type="ECO:0000255" key="2">
    <source>
        <dbReference type="HAMAP-Rule" id="MF_00103"/>
    </source>
</evidence>
<gene>
    <name evidence="2" type="primary">mutM</name>
    <name evidence="2" type="synonym">fpg</name>
    <name type="ordered locus">A1I_06720</name>
</gene>
<protein>
    <recommendedName>
        <fullName evidence="2">Formamidopyrimidine-DNA glycosylase</fullName>
        <shortName evidence="2">Fapy-DNA glycosylase</shortName>
        <ecNumber evidence="2">3.2.2.23</ecNumber>
    </recommendedName>
    <alternativeName>
        <fullName evidence="2">DNA-(apurinic or apyrimidinic site) lyase MutM</fullName>
        <shortName evidence="2">AP lyase MutM</shortName>
        <ecNumber evidence="2">4.2.99.18</ecNumber>
    </alternativeName>
</protein>
<organism>
    <name type="scientific">Rickettsia bellii (strain OSU 85-389)</name>
    <dbReference type="NCBI Taxonomy" id="391896"/>
    <lineage>
        <taxon>Bacteria</taxon>
        <taxon>Pseudomonadati</taxon>
        <taxon>Pseudomonadota</taxon>
        <taxon>Alphaproteobacteria</taxon>
        <taxon>Rickettsiales</taxon>
        <taxon>Rickettsiaceae</taxon>
        <taxon>Rickettsieae</taxon>
        <taxon>Rickettsia</taxon>
        <taxon>belli group</taxon>
    </lineage>
</organism>
<sequence length="273" mass="31103">MPELPEVETLKNSLESKLIGLVIKKVEFKRDNLRYKLSADLADQIVNTNIINVRRRAKYLIIDFNNNHSLIVHLGMSGRFTLQPNNYEVKKHDHVVFNLSNNEKLIFNDTRRFGMIYSFHTELLEKDFFANLALEPLSDSFELQYLKSKLMNKKVPIKNLLMDNRIVVGVGNIYASESLHLAKIHPDKFGKDLNDDEIKNLIAAVKNVLSKAIIAGGTTLKDFVNGDNKPGYFTQQLMVYARDGQECLSCSSSIIKTKHSGRSTFYCKSCQKA</sequence>